<accession>B3E0I8</accession>
<keyword id="KW-0687">Ribonucleoprotein</keyword>
<keyword id="KW-0689">Ribosomal protein</keyword>
<keyword id="KW-0694">RNA-binding</keyword>
<keyword id="KW-0699">rRNA-binding</keyword>
<evidence type="ECO:0000255" key="1">
    <source>
        <dbReference type="HAMAP-Rule" id="MF_00531"/>
    </source>
</evidence>
<evidence type="ECO:0000305" key="2"/>
<comment type="function">
    <text evidence="1">Protein S19 forms a complex with S13 that binds strongly to the 16S ribosomal RNA.</text>
</comment>
<comment type="similarity">
    <text evidence="1">Belongs to the universal ribosomal protein uS19 family.</text>
</comment>
<protein>
    <recommendedName>
        <fullName evidence="1">Small ribosomal subunit protein uS19</fullName>
    </recommendedName>
    <alternativeName>
        <fullName evidence="2">30S ribosomal protein S19</fullName>
    </alternativeName>
</protein>
<proteinExistence type="inferred from homology"/>
<sequence length="91" mass="10302">MGRSLKKGPFVDSHLIEKIEKLGAAKKPIKTWSRRSMIIPDFVGHTFLVHNGRTFQSVYVTENMVGHRLGEFAPTRTFKKHGAHTEKASVK</sequence>
<dbReference type="EMBL" id="CP000975">
    <property type="protein sequence ID" value="ACD82742.1"/>
    <property type="molecule type" value="Genomic_DNA"/>
</dbReference>
<dbReference type="RefSeq" id="WP_012463024.1">
    <property type="nucleotide sequence ID" value="NC_010794.1"/>
</dbReference>
<dbReference type="SMR" id="B3E0I8"/>
<dbReference type="STRING" id="481448.Minf_0687"/>
<dbReference type="KEGG" id="min:Minf_0687"/>
<dbReference type="eggNOG" id="COG0185">
    <property type="taxonomic scope" value="Bacteria"/>
</dbReference>
<dbReference type="HOGENOM" id="CLU_144911_0_1_0"/>
<dbReference type="OrthoDB" id="9797833at2"/>
<dbReference type="Proteomes" id="UP000009149">
    <property type="component" value="Chromosome"/>
</dbReference>
<dbReference type="GO" id="GO:0005737">
    <property type="term" value="C:cytoplasm"/>
    <property type="evidence" value="ECO:0007669"/>
    <property type="project" value="UniProtKB-ARBA"/>
</dbReference>
<dbReference type="GO" id="GO:0015935">
    <property type="term" value="C:small ribosomal subunit"/>
    <property type="evidence" value="ECO:0007669"/>
    <property type="project" value="InterPro"/>
</dbReference>
<dbReference type="GO" id="GO:0019843">
    <property type="term" value="F:rRNA binding"/>
    <property type="evidence" value="ECO:0007669"/>
    <property type="project" value="UniProtKB-UniRule"/>
</dbReference>
<dbReference type="GO" id="GO:0003735">
    <property type="term" value="F:structural constituent of ribosome"/>
    <property type="evidence" value="ECO:0007669"/>
    <property type="project" value="InterPro"/>
</dbReference>
<dbReference type="GO" id="GO:0000028">
    <property type="term" value="P:ribosomal small subunit assembly"/>
    <property type="evidence" value="ECO:0007669"/>
    <property type="project" value="TreeGrafter"/>
</dbReference>
<dbReference type="GO" id="GO:0006412">
    <property type="term" value="P:translation"/>
    <property type="evidence" value="ECO:0007669"/>
    <property type="project" value="UniProtKB-UniRule"/>
</dbReference>
<dbReference type="FunFam" id="3.30.860.10:FF:000001">
    <property type="entry name" value="30S ribosomal protein S19"/>
    <property type="match status" value="1"/>
</dbReference>
<dbReference type="Gene3D" id="3.30.860.10">
    <property type="entry name" value="30s Ribosomal Protein S19, Chain A"/>
    <property type="match status" value="1"/>
</dbReference>
<dbReference type="HAMAP" id="MF_00531">
    <property type="entry name" value="Ribosomal_uS19"/>
    <property type="match status" value="1"/>
</dbReference>
<dbReference type="InterPro" id="IPR002222">
    <property type="entry name" value="Ribosomal_uS19"/>
</dbReference>
<dbReference type="InterPro" id="IPR005732">
    <property type="entry name" value="Ribosomal_uS19_bac-type"/>
</dbReference>
<dbReference type="InterPro" id="IPR020934">
    <property type="entry name" value="Ribosomal_uS19_CS"/>
</dbReference>
<dbReference type="InterPro" id="IPR023575">
    <property type="entry name" value="Ribosomal_uS19_SF"/>
</dbReference>
<dbReference type="NCBIfam" id="TIGR01050">
    <property type="entry name" value="rpsS_bact"/>
    <property type="match status" value="1"/>
</dbReference>
<dbReference type="PANTHER" id="PTHR11880">
    <property type="entry name" value="RIBOSOMAL PROTEIN S19P FAMILY MEMBER"/>
    <property type="match status" value="1"/>
</dbReference>
<dbReference type="PANTHER" id="PTHR11880:SF8">
    <property type="entry name" value="SMALL RIBOSOMAL SUBUNIT PROTEIN US19M"/>
    <property type="match status" value="1"/>
</dbReference>
<dbReference type="Pfam" id="PF00203">
    <property type="entry name" value="Ribosomal_S19"/>
    <property type="match status" value="1"/>
</dbReference>
<dbReference type="PIRSF" id="PIRSF002144">
    <property type="entry name" value="Ribosomal_S19"/>
    <property type="match status" value="1"/>
</dbReference>
<dbReference type="PRINTS" id="PR00975">
    <property type="entry name" value="RIBOSOMALS19"/>
</dbReference>
<dbReference type="SUPFAM" id="SSF54570">
    <property type="entry name" value="Ribosomal protein S19"/>
    <property type="match status" value="1"/>
</dbReference>
<dbReference type="PROSITE" id="PS00323">
    <property type="entry name" value="RIBOSOMAL_S19"/>
    <property type="match status" value="1"/>
</dbReference>
<organism>
    <name type="scientific">Methylacidiphilum infernorum (isolate V4)</name>
    <name type="common">Methylokorus infernorum (strain V4)</name>
    <dbReference type="NCBI Taxonomy" id="481448"/>
    <lineage>
        <taxon>Bacteria</taxon>
        <taxon>Pseudomonadati</taxon>
        <taxon>Verrucomicrobiota</taxon>
        <taxon>Methylacidiphilae</taxon>
        <taxon>Methylacidiphilales</taxon>
        <taxon>Methylacidiphilaceae</taxon>
        <taxon>Methylacidiphilum (ex Ratnadevi et al. 2023)</taxon>
    </lineage>
</organism>
<reference key="1">
    <citation type="journal article" date="2008" name="Biol. Direct">
        <title>Complete genome sequence of the extremely acidophilic methanotroph isolate V4, Methylacidiphilum infernorum, a representative of the bacterial phylum Verrucomicrobia.</title>
        <authorList>
            <person name="Hou S."/>
            <person name="Makarova K.S."/>
            <person name="Saw J.H."/>
            <person name="Senin P."/>
            <person name="Ly B.V."/>
            <person name="Zhou Z."/>
            <person name="Ren Y."/>
            <person name="Wang J."/>
            <person name="Galperin M.Y."/>
            <person name="Omelchenko M.V."/>
            <person name="Wolf Y.I."/>
            <person name="Yutin N."/>
            <person name="Koonin E.V."/>
            <person name="Stott M.B."/>
            <person name="Mountain B.W."/>
            <person name="Crowe M.A."/>
            <person name="Smirnova A.V."/>
            <person name="Dunfield P.F."/>
            <person name="Feng L."/>
            <person name="Wang L."/>
            <person name="Alam M."/>
        </authorList>
    </citation>
    <scope>NUCLEOTIDE SEQUENCE [LARGE SCALE GENOMIC DNA]</scope>
    <source>
        <strain>Isolate V4</strain>
    </source>
</reference>
<feature type="chain" id="PRO_1000128001" description="Small ribosomal subunit protein uS19">
    <location>
        <begin position="1"/>
        <end position="91"/>
    </location>
</feature>
<gene>
    <name evidence="1" type="primary">rpsS</name>
    <name type="ordered locus">Minf_0687</name>
</gene>
<name>RS19_METI4</name>